<gene>
    <name evidence="1" type="primary">queG</name>
    <name type="ordered locus">SynRCC307_0007</name>
</gene>
<dbReference type="EC" id="1.17.99.6" evidence="1"/>
<dbReference type="EMBL" id="CT978603">
    <property type="protein sequence ID" value="CAK26910.1"/>
    <property type="molecule type" value="Genomic_DNA"/>
</dbReference>
<dbReference type="SMR" id="A5GPV1"/>
<dbReference type="STRING" id="316278.SynRCC307_0007"/>
<dbReference type="KEGG" id="syr:SynRCC307_0007"/>
<dbReference type="eggNOG" id="COG1600">
    <property type="taxonomic scope" value="Bacteria"/>
</dbReference>
<dbReference type="HOGENOM" id="CLU_030790_0_0_3"/>
<dbReference type="OrthoDB" id="9784571at2"/>
<dbReference type="UniPathway" id="UPA00392"/>
<dbReference type="Proteomes" id="UP000001115">
    <property type="component" value="Chromosome"/>
</dbReference>
<dbReference type="GO" id="GO:0005737">
    <property type="term" value="C:cytoplasm"/>
    <property type="evidence" value="ECO:0007669"/>
    <property type="project" value="UniProtKB-SubCell"/>
</dbReference>
<dbReference type="GO" id="GO:0051539">
    <property type="term" value="F:4 iron, 4 sulfur cluster binding"/>
    <property type="evidence" value="ECO:0007669"/>
    <property type="project" value="UniProtKB-KW"/>
</dbReference>
<dbReference type="GO" id="GO:0052693">
    <property type="term" value="F:epoxyqueuosine reductase activity"/>
    <property type="evidence" value="ECO:0007669"/>
    <property type="project" value="UniProtKB-UniRule"/>
</dbReference>
<dbReference type="GO" id="GO:0046872">
    <property type="term" value="F:metal ion binding"/>
    <property type="evidence" value="ECO:0007669"/>
    <property type="project" value="UniProtKB-KW"/>
</dbReference>
<dbReference type="GO" id="GO:0008616">
    <property type="term" value="P:queuosine biosynthetic process"/>
    <property type="evidence" value="ECO:0007669"/>
    <property type="project" value="UniProtKB-UniRule"/>
</dbReference>
<dbReference type="GO" id="GO:0006400">
    <property type="term" value="P:tRNA modification"/>
    <property type="evidence" value="ECO:0007669"/>
    <property type="project" value="UniProtKB-UniRule"/>
</dbReference>
<dbReference type="Gene3D" id="3.30.70.20">
    <property type="match status" value="1"/>
</dbReference>
<dbReference type="HAMAP" id="MF_00916">
    <property type="entry name" value="QueG"/>
    <property type="match status" value="1"/>
</dbReference>
<dbReference type="InterPro" id="IPR017896">
    <property type="entry name" value="4Fe4S_Fe-S-bd"/>
</dbReference>
<dbReference type="InterPro" id="IPR017900">
    <property type="entry name" value="4Fe4S_Fe_S_CS"/>
</dbReference>
<dbReference type="InterPro" id="IPR004453">
    <property type="entry name" value="QueG"/>
</dbReference>
<dbReference type="InterPro" id="IPR013542">
    <property type="entry name" value="QueG_DUF1730"/>
</dbReference>
<dbReference type="NCBIfam" id="TIGR00276">
    <property type="entry name" value="tRNA epoxyqueuosine(34) reductase QueG"/>
    <property type="match status" value="1"/>
</dbReference>
<dbReference type="PANTHER" id="PTHR30002">
    <property type="entry name" value="EPOXYQUEUOSINE REDUCTASE"/>
    <property type="match status" value="1"/>
</dbReference>
<dbReference type="PANTHER" id="PTHR30002:SF4">
    <property type="entry name" value="EPOXYQUEUOSINE REDUCTASE"/>
    <property type="match status" value="1"/>
</dbReference>
<dbReference type="Pfam" id="PF13484">
    <property type="entry name" value="Fer4_16"/>
    <property type="match status" value="1"/>
</dbReference>
<dbReference type="Pfam" id="PF08331">
    <property type="entry name" value="QueG_DUF1730"/>
    <property type="match status" value="1"/>
</dbReference>
<dbReference type="SUPFAM" id="SSF54862">
    <property type="entry name" value="4Fe-4S ferredoxins"/>
    <property type="match status" value="1"/>
</dbReference>
<dbReference type="PROSITE" id="PS00198">
    <property type="entry name" value="4FE4S_FER_1"/>
    <property type="match status" value="1"/>
</dbReference>
<dbReference type="PROSITE" id="PS51379">
    <property type="entry name" value="4FE4S_FER_2"/>
    <property type="match status" value="1"/>
</dbReference>
<feature type="chain" id="PRO_0000416084" description="Epoxyqueuosine reductase">
    <location>
        <begin position="1"/>
        <end position="319"/>
    </location>
</feature>
<feature type="domain" description="4Fe-4S ferredoxin-type" evidence="1">
    <location>
        <begin position="188"/>
        <end position="220"/>
    </location>
</feature>
<feature type="active site" description="Proton donor" evidence="1">
    <location>
        <position position="146"/>
    </location>
</feature>
<feature type="binding site" evidence="1">
    <location>
        <position position="200"/>
    </location>
    <ligand>
        <name>[4Fe-4S] cluster</name>
        <dbReference type="ChEBI" id="CHEBI:49883"/>
        <label>1</label>
    </ligand>
</feature>
<feature type="binding site" evidence="1">
    <location>
        <position position="203"/>
    </location>
    <ligand>
        <name>[4Fe-4S] cluster</name>
        <dbReference type="ChEBI" id="CHEBI:49883"/>
        <label>1</label>
    </ligand>
</feature>
<feature type="binding site" evidence="1">
    <location>
        <position position="206"/>
    </location>
    <ligand>
        <name>[4Fe-4S] cluster</name>
        <dbReference type="ChEBI" id="CHEBI:49883"/>
        <label>1</label>
    </ligand>
</feature>
<feature type="binding site" evidence="1">
    <location>
        <position position="210"/>
    </location>
    <ligand>
        <name>[4Fe-4S] cluster</name>
        <dbReference type="ChEBI" id="CHEBI:49883"/>
        <label>2</label>
    </ligand>
</feature>
<feature type="binding site" evidence="1">
    <location>
        <position position="226"/>
    </location>
    <ligand>
        <name>[4Fe-4S] cluster</name>
        <dbReference type="ChEBI" id="CHEBI:49883"/>
        <label>2</label>
    </ligand>
</feature>
<feature type="binding site" evidence="1">
    <location>
        <position position="250"/>
    </location>
    <ligand>
        <name>[4Fe-4S] cluster</name>
        <dbReference type="ChEBI" id="CHEBI:49883"/>
        <label>2</label>
    </ligand>
</feature>
<feature type="binding site" evidence="1">
    <location>
        <position position="253"/>
    </location>
    <ligand>
        <name>[4Fe-4S] cluster</name>
        <dbReference type="ChEBI" id="CHEBI:49883"/>
        <label>2</label>
    </ligand>
</feature>
<feature type="binding site" evidence="1">
    <location>
        <position position="257"/>
    </location>
    <ligand>
        <name>[4Fe-4S] cluster</name>
        <dbReference type="ChEBI" id="CHEBI:49883"/>
        <label>1</label>
    </ligand>
</feature>
<organism>
    <name type="scientific">Synechococcus sp. (strain RCC307)</name>
    <dbReference type="NCBI Taxonomy" id="316278"/>
    <lineage>
        <taxon>Bacteria</taxon>
        <taxon>Bacillati</taxon>
        <taxon>Cyanobacteriota</taxon>
        <taxon>Cyanophyceae</taxon>
        <taxon>Synechococcales</taxon>
        <taxon>Synechococcaceae</taxon>
        <taxon>Synechococcus</taxon>
    </lineage>
</organism>
<keyword id="KW-0004">4Fe-4S</keyword>
<keyword id="KW-0963">Cytoplasm</keyword>
<keyword id="KW-0408">Iron</keyword>
<keyword id="KW-0411">Iron-sulfur</keyword>
<keyword id="KW-0479">Metal-binding</keyword>
<keyword id="KW-0560">Oxidoreductase</keyword>
<keyword id="KW-0671">Queuosine biosynthesis</keyword>
<keyword id="KW-1185">Reference proteome</keyword>
<keyword id="KW-0819">tRNA processing</keyword>
<sequence length="319" mass="35474">MVSSDTGECFSGATVRVPADLADALKQQALEQGFALAGIAAVPSGERIAMRTAALQRWLAAGHQADMAWMQDPRRQAIELLLPGVQSVLAVALNYYVDQQQTPASPKIARYGWGRDYHRVMDQRLRRLGRWLEEQQPSCRWRACVDSAPLMDKAWAEEAGLGWIGKNGNLISPSHGSWLLLGHLLTTASLPADQPARSLCGHCQRCLPACPTAAITEPFVVDSRRCIAFHTIENRDEQVPLPLHGWVAGCDVCQEVCPWNQHHAQSSADPAVQPREWILSSTVNEMASWSDDTWSERLQASALRRIKPWMWRRNLADLG</sequence>
<evidence type="ECO:0000255" key="1">
    <source>
        <dbReference type="HAMAP-Rule" id="MF_00916"/>
    </source>
</evidence>
<reference key="1">
    <citation type="submission" date="2006-05" db="EMBL/GenBank/DDBJ databases">
        <authorList>
            <consortium name="Genoscope"/>
        </authorList>
    </citation>
    <scope>NUCLEOTIDE SEQUENCE [LARGE SCALE GENOMIC DNA]</scope>
    <source>
        <strain>RCC307</strain>
    </source>
</reference>
<name>QUEG_SYNR3</name>
<comment type="function">
    <text evidence="1">Catalyzes the conversion of epoxyqueuosine (oQ) to queuosine (Q), which is a hypermodified base found in the wobble positions of tRNA(Asp), tRNA(Asn), tRNA(His) and tRNA(Tyr).</text>
</comment>
<comment type="catalytic activity">
    <reaction evidence="1">
        <text>epoxyqueuosine(34) in tRNA + AH2 = queuosine(34) in tRNA + A + H2O</text>
        <dbReference type="Rhea" id="RHEA:32159"/>
        <dbReference type="Rhea" id="RHEA-COMP:18571"/>
        <dbReference type="Rhea" id="RHEA-COMP:18582"/>
        <dbReference type="ChEBI" id="CHEBI:13193"/>
        <dbReference type="ChEBI" id="CHEBI:15377"/>
        <dbReference type="ChEBI" id="CHEBI:17499"/>
        <dbReference type="ChEBI" id="CHEBI:194431"/>
        <dbReference type="ChEBI" id="CHEBI:194443"/>
        <dbReference type="EC" id="1.17.99.6"/>
    </reaction>
</comment>
<comment type="cofactor">
    <cofactor evidence="1">
        <name>cob(II)alamin</name>
        <dbReference type="ChEBI" id="CHEBI:16304"/>
    </cofactor>
</comment>
<comment type="cofactor">
    <cofactor evidence="1">
        <name>[4Fe-4S] cluster</name>
        <dbReference type="ChEBI" id="CHEBI:49883"/>
    </cofactor>
    <text evidence="1">Binds 2 [4Fe-4S] clusters per monomer.</text>
</comment>
<comment type="pathway">
    <text evidence="1">tRNA modification; tRNA-queuosine biosynthesis.</text>
</comment>
<comment type="subunit">
    <text evidence="1">Monomer.</text>
</comment>
<comment type="subcellular location">
    <subcellularLocation>
        <location evidence="1">Cytoplasm</location>
    </subcellularLocation>
</comment>
<comment type="similarity">
    <text evidence="1">Belongs to the QueG family.</text>
</comment>
<proteinExistence type="inferred from homology"/>
<protein>
    <recommendedName>
        <fullName evidence="1">Epoxyqueuosine reductase</fullName>
        <ecNumber evidence="1">1.17.99.6</ecNumber>
    </recommendedName>
    <alternativeName>
        <fullName evidence="1">Queuosine biosynthesis protein QueG</fullName>
    </alternativeName>
</protein>
<accession>A5GPV1</accession>